<name>APT_STAAR</name>
<proteinExistence type="inferred from homology"/>
<sequence>MDLKQYVSEVQDWPKPGVSFKDITTIMDNGEAYGYATDKIVEYAKDRDVDIVVGPEARGFIIGCPVAYSMGIGFAPVRKEGKLPREVIRYEYDLEYGTNVLTMHKDAIKPGQRVLITDDLLATGGTIEAAIKLVEKLGGIVVGIAFIIELKYLNGIEKIKDYDVMSLISYDE</sequence>
<protein>
    <recommendedName>
        <fullName evidence="1">Adenine phosphoribosyltransferase</fullName>
        <shortName evidence="1">APRT</shortName>
        <ecNumber evidence="1">2.4.2.7</ecNumber>
    </recommendedName>
</protein>
<reference key="1">
    <citation type="journal article" date="2004" name="Proc. Natl. Acad. Sci. U.S.A.">
        <title>Complete genomes of two clinical Staphylococcus aureus strains: evidence for the rapid evolution of virulence and drug resistance.</title>
        <authorList>
            <person name="Holden M.T.G."/>
            <person name="Feil E.J."/>
            <person name="Lindsay J.A."/>
            <person name="Peacock S.J."/>
            <person name="Day N.P.J."/>
            <person name="Enright M.C."/>
            <person name="Foster T.J."/>
            <person name="Moore C.E."/>
            <person name="Hurst L."/>
            <person name="Atkin R."/>
            <person name="Barron A."/>
            <person name="Bason N."/>
            <person name="Bentley S.D."/>
            <person name="Chillingworth C."/>
            <person name="Chillingworth T."/>
            <person name="Churcher C."/>
            <person name="Clark L."/>
            <person name="Corton C."/>
            <person name="Cronin A."/>
            <person name="Doggett J."/>
            <person name="Dowd L."/>
            <person name="Feltwell T."/>
            <person name="Hance Z."/>
            <person name="Harris B."/>
            <person name="Hauser H."/>
            <person name="Holroyd S."/>
            <person name="Jagels K."/>
            <person name="James K.D."/>
            <person name="Lennard N."/>
            <person name="Line A."/>
            <person name="Mayes R."/>
            <person name="Moule S."/>
            <person name="Mungall K."/>
            <person name="Ormond D."/>
            <person name="Quail M.A."/>
            <person name="Rabbinowitsch E."/>
            <person name="Rutherford K.M."/>
            <person name="Sanders M."/>
            <person name="Sharp S."/>
            <person name="Simmonds M."/>
            <person name="Stevens K."/>
            <person name="Whitehead S."/>
            <person name="Barrell B.G."/>
            <person name="Spratt B.G."/>
            <person name="Parkhill J."/>
        </authorList>
    </citation>
    <scope>NUCLEOTIDE SEQUENCE [LARGE SCALE GENOMIC DNA]</scope>
    <source>
        <strain>MRSA252</strain>
    </source>
</reference>
<dbReference type="EC" id="2.4.2.7" evidence="1"/>
<dbReference type="EMBL" id="BX571856">
    <property type="protein sequence ID" value="CAG40706.1"/>
    <property type="molecule type" value="Genomic_DNA"/>
</dbReference>
<dbReference type="RefSeq" id="WP_000364542.1">
    <property type="nucleotide sequence ID" value="NC_002952.2"/>
</dbReference>
<dbReference type="SMR" id="Q6GG69"/>
<dbReference type="KEGG" id="sar:SAR1715"/>
<dbReference type="HOGENOM" id="CLU_063339_3_0_9"/>
<dbReference type="UniPathway" id="UPA00588">
    <property type="reaction ID" value="UER00646"/>
</dbReference>
<dbReference type="Proteomes" id="UP000000596">
    <property type="component" value="Chromosome"/>
</dbReference>
<dbReference type="GO" id="GO:0005737">
    <property type="term" value="C:cytoplasm"/>
    <property type="evidence" value="ECO:0007669"/>
    <property type="project" value="UniProtKB-SubCell"/>
</dbReference>
<dbReference type="GO" id="GO:0002055">
    <property type="term" value="F:adenine binding"/>
    <property type="evidence" value="ECO:0007669"/>
    <property type="project" value="TreeGrafter"/>
</dbReference>
<dbReference type="GO" id="GO:0003999">
    <property type="term" value="F:adenine phosphoribosyltransferase activity"/>
    <property type="evidence" value="ECO:0007669"/>
    <property type="project" value="UniProtKB-UniRule"/>
</dbReference>
<dbReference type="GO" id="GO:0016208">
    <property type="term" value="F:AMP binding"/>
    <property type="evidence" value="ECO:0007669"/>
    <property type="project" value="TreeGrafter"/>
</dbReference>
<dbReference type="GO" id="GO:0006168">
    <property type="term" value="P:adenine salvage"/>
    <property type="evidence" value="ECO:0007669"/>
    <property type="project" value="InterPro"/>
</dbReference>
<dbReference type="GO" id="GO:0044209">
    <property type="term" value="P:AMP salvage"/>
    <property type="evidence" value="ECO:0007669"/>
    <property type="project" value="UniProtKB-UniRule"/>
</dbReference>
<dbReference type="GO" id="GO:0006166">
    <property type="term" value="P:purine ribonucleoside salvage"/>
    <property type="evidence" value="ECO:0007669"/>
    <property type="project" value="UniProtKB-KW"/>
</dbReference>
<dbReference type="CDD" id="cd06223">
    <property type="entry name" value="PRTases_typeI"/>
    <property type="match status" value="1"/>
</dbReference>
<dbReference type="FunFam" id="3.40.50.2020:FF:000004">
    <property type="entry name" value="Adenine phosphoribosyltransferase"/>
    <property type="match status" value="1"/>
</dbReference>
<dbReference type="Gene3D" id="3.40.50.2020">
    <property type="match status" value="1"/>
</dbReference>
<dbReference type="HAMAP" id="MF_00004">
    <property type="entry name" value="Aden_phosphoribosyltr"/>
    <property type="match status" value="1"/>
</dbReference>
<dbReference type="InterPro" id="IPR005764">
    <property type="entry name" value="Ade_phspho_trans"/>
</dbReference>
<dbReference type="InterPro" id="IPR000836">
    <property type="entry name" value="PRibTrfase_dom"/>
</dbReference>
<dbReference type="InterPro" id="IPR029057">
    <property type="entry name" value="PRTase-like"/>
</dbReference>
<dbReference type="InterPro" id="IPR050054">
    <property type="entry name" value="UPRTase/APRTase"/>
</dbReference>
<dbReference type="NCBIfam" id="TIGR01090">
    <property type="entry name" value="apt"/>
    <property type="match status" value="1"/>
</dbReference>
<dbReference type="NCBIfam" id="NF002633">
    <property type="entry name" value="PRK02304.1-2"/>
    <property type="match status" value="1"/>
</dbReference>
<dbReference type="NCBIfam" id="NF002634">
    <property type="entry name" value="PRK02304.1-3"/>
    <property type="match status" value="1"/>
</dbReference>
<dbReference type="NCBIfam" id="NF002636">
    <property type="entry name" value="PRK02304.1-5"/>
    <property type="match status" value="1"/>
</dbReference>
<dbReference type="PANTHER" id="PTHR32315">
    <property type="entry name" value="ADENINE PHOSPHORIBOSYLTRANSFERASE"/>
    <property type="match status" value="1"/>
</dbReference>
<dbReference type="PANTHER" id="PTHR32315:SF3">
    <property type="entry name" value="ADENINE PHOSPHORIBOSYLTRANSFERASE"/>
    <property type="match status" value="1"/>
</dbReference>
<dbReference type="Pfam" id="PF00156">
    <property type="entry name" value="Pribosyltran"/>
    <property type="match status" value="1"/>
</dbReference>
<dbReference type="SUPFAM" id="SSF53271">
    <property type="entry name" value="PRTase-like"/>
    <property type="match status" value="1"/>
</dbReference>
<accession>Q6GG69</accession>
<feature type="chain" id="PRO_0000149452" description="Adenine phosphoribosyltransferase">
    <location>
        <begin position="1"/>
        <end position="172"/>
    </location>
</feature>
<gene>
    <name evidence="1" type="primary">apt</name>
    <name type="ordered locus">SAR1715</name>
</gene>
<comment type="function">
    <text evidence="1">Catalyzes a salvage reaction resulting in the formation of AMP, that is energically less costly than de novo synthesis.</text>
</comment>
<comment type="catalytic activity">
    <reaction evidence="1">
        <text>AMP + diphosphate = 5-phospho-alpha-D-ribose 1-diphosphate + adenine</text>
        <dbReference type="Rhea" id="RHEA:16609"/>
        <dbReference type="ChEBI" id="CHEBI:16708"/>
        <dbReference type="ChEBI" id="CHEBI:33019"/>
        <dbReference type="ChEBI" id="CHEBI:58017"/>
        <dbReference type="ChEBI" id="CHEBI:456215"/>
        <dbReference type="EC" id="2.4.2.7"/>
    </reaction>
</comment>
<comment type="pathway">
    <text evidence="1">Purine metabolism; AMP biosynthesis via salvage pathway; AMP from adenine: step 1/1.</text>
</comment>
<comment type="subunit">
    <text evidence="1">Homodimer.</text>
</comment>
<comment type="subcellular location">
    <subcellularLocation>
        <location evidence="1">Cytoplasm</location>
    </subcellularLocation>
</comment>
<comment type="similarity">
    <text evidence="1">Belongs to the purine/pyrimidine phosphoribosyltransferase family.</text>
</comment>
<evidence type="ECO:0000255" key="1">
    <source>
        <dbReference type="HAMAP-Rule" id="MF_00004"/>
    </source>
</evidence>
<keyword id="KW-0963">Cytoplasm</keyword>
<keyword id="KW-0328">Glycosyltransferase</keyword>
<keyword id="KW-0660">Purine salvage</keyword>
<keyword id="KW-0808">Transferase</keyword>
<organism>
    <name type="scientific">Staphylococcus aureus (strain MRSA252)</name>
    <dbReference type="NCBI Taxonomy" id="282458"/>
    <lineage>
        <taxon>Bacteria</taxon>
        <taxon>Bacillati</taxon>
        <taxon>Bacillota</taxon>
        <taxon>Bacilli</taxon>
        <taxon>Bacillales</taxon>
        <taxon>Staphylococcaceae</taxon>
        <taxon>Staphylococcus</taxon>
    </lineage>
</organism>